<feature type="chain" id="PRO_0000210627" description="Uncharacterized protein MG459">
    <location>
        <begin position="1"/>
        <end position="169"/>
    </location>
</feature>
<name>Y459_MYCGE</name>
<dbReference type="EMBL" id="L43967">
    <property type="protein sequence ID" value="AAC72479.1"/>
    <property type="molecule type" value="Genomic_DNA"/>
</dbReference>
<dbReference type="EMBL" id="U01725">
    <property type="protein sequence ID" value="AAC43201.1"/>
    <property type="molecule type" value="Unassigned_DNA"/>
</dbReference>
<dbReference type="PIR" id="G64250">
    <property type="entry name" value="G64250"/>
</dbReference>
<dbReference type="RefSeq" id="WP_009885572.1">
    <property type="nucleotide sequence ID" value="NC_000908.2"/>
</dbReference>
<dbReference type="SMR" id="Q49436"/>
<dbReference type="STRING" id="243273.MG_459"/>
<dbReference type="GeneID" id="88282640"/>
<dbReference type="KEGG" id="mge:MG_459"/>
<dbReference type="eggNOG" id="COG0245">
    <property type="taxonomic scope" value="Bacteria"/>
</dbReference>
<dbReference type="HOGENOM" id="CLU_1576784_0_0_14"/>
<dbReference type="InParanoid" id="Q49436"/>
<dbReference type="OrthoDB" id="9804336at2"/>
<dbReference type="BioCyc" id="MGEN243273:G1GJ2-553-MONOMER"/>
<dbReference type="Proteomes" id="UP000000807">
    <property type="component" value="Chromosome"/>
</dbReference>
<dbReference type="GO" id="GO:0008685">
    <property type="term" value="F:2-C-methyl-D-erythritol 2,4-cyclodiphosphate synthase activity"/>
    <property type="evidence" value="ECO:0000318"/>
    <property type="project" value="GO_Central"/>
</dbReference>
<dbReference type="GO" id="GO:0016114">
    <property type="term" value="P:terpenoid biosynthetic process"/>
    <property type="evidence" value="ECO:0007669"/>
    <property type="project" value="InterPro"/>
</dbReference>
<dbReference type="Gene3D" id="3.30.1330.50">
    <property type="entry name" value="2-C-methyl-D-erythritol 2,4-cyclodiphosphate synthase"/>
    <property type="match status" value="1"/>
</dbReference>
<dbReference type="InterPro" id="IPR003526">
    <property type="entry name" value="MECDP_synthase"/>
</dbReference>
<dbReference type="InterPro" id="IPR036571">
    <property type="entry name" value="MECDP_synthase_sf"/>
</dbReference>
<dbReference type="PANTHER" id="PTHR43181">
    <property type="entry name" value="2-C-METHYL-D-ERYTHRITOL 2,4-CYCLODIPHOSPHATE SYNTHASE, CHLOROPLASTIC"/>
    <property type="match status" value="1"/>
</dbReference>
<dbReference type="PANTHER" id="PTHR43181:SF1">
    <property type="entry name" value="2-C-METHYL-D-ERYTHRITOL 2,4-CYCLODIPHOSPHATE SYNTHASE, CHLOROPLASTIC"/>
    <property type="match status" value="1"/>
</dbReference>
<dbReference type="Pfam" id="PF02542">
    <property type="entry name" value="YgbB"/>
    <property type="match status" value="1"/>
</dbReference>
<dbReference type="SUPFAM" id="SSF69765">
    <property type="entry name" value="IpsF-like"/>
    <property type="match status" value="1"/>
</dbReference>
<accession>Q49436</accession>
<accession>Q49199</accession>
<proteinExistence type="predicted"/>
<organism>
    <name type="scientific">Mycoplasma genitalium (strain ATCC 33530 / DSM 19775 / NCTC 10195 / G37)</name>
    <name type="common">Mycoplasmoides genitalium</name>
    <dbReference type="NCBI Taxonomy" id="243273"/>
    <lineage>
        <taxon>Bacteria</taxon>
        <taxon>Bacillati</taxon>
        <taxon>Mycoplasmatota</taxon>
        <taxon>Mycoplasmoidales</taxon>
        <taxon>Mycoplasmoidaceae</taxon>
        <taxon>Mycoplasmoides</taxon>
    </lineage>
</organism>
<protein>
    <recommendedName>
        <fullName>Uncharacterized protein MG459</fullName>
    </recommendedName>
</protein>
<sequence>MQLRVGLGSKKYHIKLRKESKNKFWLGGVDFENSKYIYDLENSDEVSDVIQLAVADALFGATALGDGHIVFNKGKSTVQFKGTAKKEAPRVLARTYNFIRKNWIINNIDISLEIPQEQKVDDYKHAIFAFICSALRISELTINLKVRKPLDSNEINCLAVVLVERQKTK</sequence>
<gene>
    <name type="ordered locus">MG459</name>
</gene>
<reference key="1">
    <citation type="journal article" date="1995" name="Science">
        <title>The minimal gene complement of Mycoplasma genitalium.</title>
        <authorList>
            <person name="Fraser C.M."/>
            <person name="Gocayne J.D."/>
            <person name="White O."/>
            <person name="Adams M.D."/>
            <person name="Clayton R.A."/>
            <person name="Fleischmann R.D."/>
            <person name="Bult C.J."/>
            <person name="Kerlavage A.R."/>
            <person name="Sutton G.G."/>
            <person name="Kelley J.M."/>
            <person name="Fritchman J.L."/>
            <person name="Weidman J.F."/>
            <person name="Small K.V."/>
            <person name="Sandusky M."/>
            <person name="Fuhrmann J.L."/>
            <person name="Nguyen D.T."/>
            <person name="Utterback T.R."/>
            <person name="Saudek D.M."/>
            <person name="Phillips C.A."/>
            <person name="Merrick J.M."/>
            <person name="Tomb J.-F."/>
            <person name="Dougherty B.A."/>
            <person name="Bott K.F."/>
            <person name="Hu P.-C."/>
            <person name="Lucier T.S."/>
            <person name="Peterson S.N."/>
            <person name="Smith H.O."/>
            <person name="Hutchison C.A. III"/>
            <person name="Venter J.C."/>
        </authorList>
    </citation>
    <scope>NUCLEOTIDE SEQUENCE [LARGE SCALE GENOMIC DNA]</scope>
    <source>
        <strain>ATCC 33530 / DSM 19775 / NCTC 10195 / G37</strain>
    </source>
</reference>
<reference key="2">
    <citation type="journal article" date="1993" name="J. Bacteriol.">
        <title>A survey of the Mycoplasma genitalium genome by using random sequencing.</title>
        <authorList>
            <person name="Peterson S.N."/>
            <person name="Hu P.-C."/>
            <person name="Bott K.F."/>
            <person name="Hutchison C.A. III"/>
        </authorList>
    </citation>
    <scope>NUCLEOTIDE SEQUENCE [GENOMIC DNA] OF 1-110</scope>
    <source>
        <strain>ATCC 33530 / DSM 19775 / NCTC 10195 / G37</strain>
    </source>
</reference>
<keyword id="KW-1185">Reference proteome</keyword>